<comment type="function">
    <text evidence="1">Component of the NOP7 complex, which is required for maturation of the 25S and 5.8S ribosomal RNAs and formation of the 60S ribosome.</text>
</comment>
<comment type="subunit">
    <text evidence="1">Component of the NOP7 complex, composed of ERB1, NOP7 and YTM1. The complex is held together by ERB1, which interacts with NOP7 via its N-terminal domain and with YTM1 via a high-affinity interaction between the seven-bladed beta-propeller domains of the 2 proteins. The NOP7 complex associates with the 66S pre-ribosome.</text>
</comment>
<comment type="subcellular location">
    <subcellularLocation>
        <location evidence="1">Nucleus</location>
        <location evidence="1">Nucleolus</location>
    </subcellularLocation>
    <subcellularLocation>
        <location evidence="1">Nucleus</location>
        <location evidence="1">Nucleoplasm</location>
    </subcellularLocation>
</comment>
<comment type="similarity">
    <text evidence="1">Belongs to the pescadillo family.</text>
</comment>
<dbReference type="EMBL" id="CR382128">
    <property type="protein sequence ID" value="CAG83515.1"/>
    <property type="molecule type" value="Genomic_DNA"/>
</dbReference>
<dbReference type="RefSeq" id="XP_501262.1">
    <property type="nucleotide sequence ID" value="XM_501262.1"/>
</dbReference>
<dbReference type="SMR" id="Q6CDK0"/>
<dbReference type="FunCoup" id="Q6CDK0">
    <property type="interactions" value="1357"/>
</dbReference>
<dbReference type="STRING" id="284591.Q6CDK0"/>
<dbReference type="EnsemblFungi" id="CAG83515">
    <property type="protein sequence ID" value="CAG83515"/>
    <property type="gene ID" value="YALI0_B23342g"/>
</dbReference>
<dbReference type="KEGG" id="yli:2906624"/>
<dbReference type="VEuPathDB" id="FungiDB:YALI0_B23342g"/>
<dbReference type="HOGENOM" id="CLU_019619_1_1_1"/>
<dbReference type="InParanoid" id="Q6CDK0"/>
<dbReference type="OMA" id="QKVTWIV"/>
<dbReference type="OrthoDB" id="119089at4891"/>
<dbReference type="Proteomes" id="UP000001300">
    <property type="component" value="Chromosome B"/>
</dbReference>
<dbReference type="GO" id="GO:0005654">
    <property type="term" value="C:nucleoplasm"/>
    <property type="evidence" value="ECO:0007669"/>
    <property type="project" value="UniProtKB-SubCell"/>
</dbReference>
<dbReference type="GO" id="GO:0070545">
    <property type="term" value="C:PeBoW complex"/>
    <property type="evidence" value="ECO:0000318"/>
    <property type="project" value="GO_Central"/>
</dbReference>
<dbReference type="GO" id="GO:0030687">
    <property type="term" value="C:preribosome, large subunit precursor"/>
    <property type="evidence" value="ECO:0007669"/>
    <property type="project" value="UniProtKB-UniRule"/>
</dbReference>
<dbReference type="GO" id="GO:0043021">
    <property type="term" value="F:ribonucleoprotein complex binding"/>
    <property type="evidence" value="ECO:0007669"/>
    <property type="project" value="UniProtKB-UniRule"/>
</dbReference>
<dbReference type="GO" id="GO:0003723">
    <property type="term" value="F:RNA binding"/>
    <property type="evidence" value="ECO:0000318"/>
    <property type="project" value="GO_Central"/>
</dbReference>
<dbReference type="GO" id="GO:0000466">
    <property type="term" value="P:maturation of 5.8S rRNA from tricistronic rRNA transcript (SSU-rRNA, 5.8S rRNA, LSU-rRNA)"/>
    <property type="evidence" value="ECO:0007669"/>
    <property type="project" value="UniProtKB-UniRule"/>
</dbReference>
<dbReference type="GO" id="GO:0000463">
    <property type="term" value="P:maturation of LSU-rRNA from tricistronic rRNA transcript (SSU-rRNA, 5.8S rRNA, LSU-rRNA)"/>
    <property type="evidence" value="ECO:0000318"/>
    <property type="project" value="GO_Central"/>
</dbReference>
<dbReference type="CDD" id="cd17709">
    <property type="entry name" value="BRCT_pescadillo_like"/>
    <property type="match status" value="1"/>
</dbReference>
<dbReference type="FunFam" id="3.40.50.10190:FF:000067">
    <property type="entry name" value="Pescadillo homolog"/>
    <property type="match status" value="1"/>
</dbReference>
<dbReference type="Gene3D" id="3.40.50.10190">
    <property type="entry name" value="BRCT domain"/>
    <property type="match status" value="1"/>
</dbReference>
<dbReference type="HAMAP" id="MF_03028">
    <property type="entry name" value="Pescadillo"/>
    <property type="match status" value="1"/>
</dbReference>
<dbReference type="InterPro" id="IPR001357">
    <property type="entry name" value="BRCT_dom"/>
</dbReference>
<dbReference type="InterPro" id="IPR036420">
    <property type="entry name" value="BRCT_dom_sf"/>
</dbReference>
<dbReference type="InterPro" id="IPR010613">
    <property type="entry name" value="PES"/>
</dbReference>
<dbReference type="PANTHER" id="PTHR12221">
    <property type="entry name" value="PESCADILLO - RELATED"/>
    <property type="match status" value="1"/>
</dbReference>
<dbReference type="PANTHER" id="PTHR12221:SF6">
    <property type="entry name" value="PESCADILLO HOMOLOG"/>
    <property type="match status" value="1"/>
</dbReference>
<dbReference type="Pfam" id="PF16589">
    <property type="entry name" value="BRCT_2"/>
    <property type="match status" value="1"/>
</dbReference>
<dbReference type="Pfam" id="PF06732">
    <property type="entry name" value="Pescadillo_N"/>
    <property type="match status" value="1"/>
</dbReference>
<dbReference type="SMART" id="SM00292">
    <property type="entry name" value="BRCT"/>
    <property type="match status" value="1"/>
</dbReference>
<dbReference type="SUPFAM" id="SSF52113">
    <property type="entry name" value="BRCT domain"/>
    <property type="match status" value="1"/>
</dbReference>
<dbReference type="PROSITE" id="PS50172">
    <property type="entry name" value="BRCT"/>
    <property type="match status" value="1"/>
</dbReference>
<protein>
    <recommendedName>
        <fullName evidence="1">Pescadillo homolog</fullName>
    </recommendedName>
    <alternativeName>
        <fullName evidence="1">Nucleolar protein 7 homolog</fullName>
    </alternativeName>
</protein>
<reference key="1">
    <citation type="journal article" date="2004" name="Nature">
        <title>Genome evolution in yeasts.</title>
        <authorList>
            <person name="Dujon B."/>
            <person name="Sherman D."/>
            <person name="Fischer G."/>
            <person name="Durrens P."/>
            <person name="Casaregola S."/>
            <person name="Lafontaine I."/>
            <person name="de Montigny J."/>
            <person name="Marck C."/>
            <person name="Neuveglise C."/>
            <person name="Talla E."/>
            <person name="Goffard N."/>
            <person name="Frangeul L."/>
            <person name="Aigle M."/>
            <person name="Anthouard V."/>
            <person name="Babour A."/>
            <person name="Barbe V."/>
            <person name="Barnay S."/>
            <person name="Blanchin S."/>
            <person name="Beckerich J.-M."/>
            <person name="Beyne E."/>
            <person name="Bleykasten C."/>
            <person name="Boisrame A."/>
            <person name="Boyer J."/>
            <person name="Cattolico L."/>
            <person name="Confanioleri F."/>
            <person name="de Daruvar A."/>
            <person name="Despons L."/>
            <person name="Fabre E."/>
            <person name="Fairhead C."/>
            <person name="Ferry-Dumazet H."/>
            <person name="Groppi A."/>
            <person name="Hantraye F."/>
            <person name="Hennequin C."/>
            <person name="Jauniaux N."/>
            <person name="Joyet P."/>
            <person name="Kachouri R."/>
            <person name="Kerrest A."/>
            <person name="Koszul R."/>
            <person name="Lemaire M."/>
            <person name="Lesur I."/>
            <person name="Ma L."/>
            <person name="Muller H."/>
            <person name="Nicaud J.-M."/>
            <person name="Nikolski M."/>
            <person name="Oztas S."/>
            <person name="Ozier-Kalogeropoulos O."/>
            <person name="Pellenz S."/>
            <person name="Potier S."/>
            <person name="Richard G.-F."/>
            <person name="Straub M.-L."/>
            <person name="Suleau A."/>
            <person name="Swennen D."/>
            <person name="Tekaia F."/>
            <person name="Wesolowski-Louvel M."/>
            <person name="Westhof E."/>
            <person name="Wirth B."/>
            <person name="Zeniou-Meyer M."/>
            <person name="Zivanovic Y."/>
            <person name="Bolotin-Fukuhara M."/>
            <person name="Thierry A."/>
            <person name="Bouchier C."/>
            <person name="Caudron B."/>
            <person name="Scarpelli C."/>
            <person name="Gaillardin C."/>
            <person name="Weissenbach J."/>
            <person name="Wincker P."/>
            <person name="Souciet J.-L."/>
        </authorList>
    </citation>
    <scope>NUCLEOTIDE SEQUENCE [LARGE SCALE GENOMIC DNA]</scope>
    <source>
        <strain>CLIB 122 / E 150</strain>
    </source>
</reference>
<proteinExistence type="inferred from homology"/>
<accession>Q6CDK0</accession>
<evidence type="ECO:0000255" key="1">
    <source>
        <dbReference type="HAMAP-Rule" id="MF_03028"/>
    </source>
</evidence>
<evidence type="ECO:0000256" key="2">
    <source>
        <dbReference type="SAM" id="MobiDB-lite"/>
    </source>
</evidence>
<gene>
    <name evidence="1" type="primary">NOP7</name>
    <name type="ordered locus">YALI0B23342g</name>
</gene>
<sequence>MGQIKKKHTAGAARNFITRTQAIRKLQVSLADFRRLCIFKGIYPREPRSKKKANKGSTAPVTFYYAKDIQYLLHEPVLDKFREHKTFAKKLTRALGRGDLHDAKRIDENRPRYHLDHIIKERYPTFMDALRDIDDALSMLFLFAALPASDDVSARLVSEAEAICTQWMAFVARERLVRKVFVSIKGVYYSANIRGVEVMWLVPFRFPQNIPADIDFRVMLTFLEFYTTLLHFVLYKLYNENGLVFPPIINSTKLSGVGGINAYVLESRQNAGVVPQIEGNSEAKVENVSAAVLSKAAKADAGEEEEVEEEEEVEDDGLDSFSAEKGDALAQPTFNSTAGQLFSNFTIFIGREVPLDIIEFLIIAFGGKVISESAMDELIDNEDETRGNVIDEKTLKQKFNLASVTHQITDRPTLREKVPGRTYVQPQWVFDSINEGKLLPVSEYAPGERLPAHLSPWGDAGTYDPTADVSDASDDDEDDEDIEVAPEDYDKDDEEEEAEAEAKQHQRELEAEAKGTKADPAAAPKKAKRKADKMTKAEKQEEEDKKLRMIMMSNKQKKLYKKMQYSNDKKSDREAELKKRRKLNEKKEKR</sequence>
<name>PESC_YARLI</name>
<organism>
    <name type="scientific">Yarrowia lipolytica (strain CLIB 122 / E 150)</name>
    <name type="common">Yeast</name>
    <name type="synonym">Candida lipolytica</name>
    <dbReference type="NCBI Taxonomy" id="284591"/>
    <lineage>
        <taxon>Eukaryota</taxon>
        <taxon>Fungi</taxon>
        <taxon>Dikarya</taxon>
        <taxon>Ascomycota</taxon>
        <taxon>Saccharomycotina</taxon>
        <taxon>Dipodascomycetes</taxon>
        <taxon>Dipodascales</taxon>
        <taxon>Dipodascales incertae sedis</taxon>
        <taxon>Yarrowia</taxon>
    </lineage>
</organism>
<feature type="chain" id="PRO_0000370505" description="Pescadillo homolog">
    <location>
        <begin position="1"/>
        <end position="590"/>
    </location>
</feature>
<feature type="domain" description="BRCT" evidence="1">
    <location>
        <begin position="337"/>
        <end position="446"/>
    </location>
</feature>
<feature type="region of interest" description="Disordered" evidence="2">
    <location>
        <begin position="297"/>
        <end position="318"/>
    </location>
</feature>
<feature type="region of interest" description="Disordered" evidence="2">
    <location>
        <begin position="452"/>
        <end position="590"/>
    </location>
</feature>
<feature type="coiled-coil region" evidence="1">
    <location>
        <begin position="489"/>
        <end position="589"/>
    </location>
</feature>
<feature type="compositionally biased region" description="Acidic residues" evidence="2">
    <location>
        <begin position="302"/>
        <end position="318"/>
    </location>
</feature>
<feature type="compositionally biased region" description="Acidic residues" evidence="2">
    <location>
        <begin position="471"/>
        <end position="499"/>
    </location>
</feature>
<feature type="compositionally biased region" description="Basic and acidic residues" evidence="2">
    <location>
        <begin position="500"/>
        <end position="517"/>
    </location>
</feature>
<feature type="compositionally biased region" description="Basic and acidic residues" evidence="2">
    <location>
        <begin position="532"/>
        <end position="547"/>
    </location>
</feature>
<feature type="compositionally biased region" description="Basic and acidic residues" evidence="2">
    <location>
        <begin position="567"/>
        <end position="577"/>
    </location>
</feature>
<keyword id="KW-0175">Coiled coil</keyword>
<keyword id="KW-0539">Nucleus</keyword>
<keyword id="KW-1185">Reference proteome</keyword>
<keyword id="KW-0690">Ribosome biogenesis</keyword>
<keyword id="KW-0698">rRNA processing</keyword>